<keyword id="KW-0028">Amino-acid biosynthesis</keyword>
<keyword id="KW-0100">Branched-chain amino acid biosynthesis</keyword>
<keyword id="KW-0432">Leucine biosynthesis</keyword>
<keyword id="KW-0456">Lyase</keyword>
<keyword id="KW-1185">Reference proteome</keyword>
<protein>
    <recommendedName>
        <fullName>3-isopropylmalate dehydratase small subunit 2</fullName>
        <ecNumber>4.2.1.33</ecNumber>
    </recommendedName>
    <alternativeName>
        <fullName>Alpha-IPM isomerase 2</fullName>
        <shortName>IPMI 2</shortName>
    </alternativeName>
    <alternativeName>
        <fullName>Isopropylmalate isomerase 2</fullName>
    </alternativeName>
</protein>
<name>LEUD2_THEMA</name>
<gene>
    <name type="primary">leuD2</name>
    <name type="ordered locus">TM_0555</name>
</gene>
<feature type="chain" id="PRO_0000141928" description="3-isopropylmalate dehydratase small subunit 2">
    <location>
        <begin position="1"/>
        <end position="166"/>
    </location>
</feature>
<accession>Q9WZ25</accession>
<comment type="function">
    <text evidence="1">Catalyzes the isomerization between 2-isopropylmalate and 3-isopropylmalate, via the formation of 2-isopropylmaleate.</text>
</comment>
<comment type="catalytic activity">
    <reaction>
        <text>(2R,3S)-3-isopropylmalate = (2S)-2-isopropylmalate</text>
        <dbReference type="Rhea" id="RHEA:32287"/>
        <dbReference type="ChEBI" id="CHEBI:1178"/>
        <dbReference type="ChEBI" id="CHEBI:35121"/>
        <dbReference type="EC" id="4.2.1.33"/>
    </reaction>
</comment>
<comment type="pathway">
    <text>Amino-acid biosynthesis; L-leucine biosynthesis; L-leucine from 3-methyl-2-oxobutanoate: step 2/4.</text>
</comment>
<comment type="subunit">
    <text evidence="1">Heterodimer of LeuC and LeuD.</text>
</comment>
<comment type="similarity">
    <text evidence="2">Belongs to the LeuD family. LeuD type 2 subfamily.</text>
</comment>
<proteinExistence type="inferred from homology"/>
<organism>
    <name type="scientific">Thermotoga maritima (strain ATCC 43589 / DSM 3109 / JCM 10099 / NBRC 100826 / MSB8)</name>
    <dbReference type="NCBI Taxonomy" id="243274"/>
    <lineage>
        <taxon>Bacteria</taxon>
        <taxon>Thermotogati</taxon>
        <taxon>Thermotogota</taxon>
        <taxon>Thermotogae</taxon>
        <taxon>Thermotogales</taxon>
        <taxon>Thermotogaceae</taxon>
        <taxon>Thermotoga</taxon>
    </lineage>
</organism>
<sequence length="166" mass="18451">MVVKIKGKVFVFGDNVNTDEIIPARYLNTSDPQELAKYCMEDARPGFGRRDDIKGSIIVAGENFGCGSSREHAPVAIKAAGISCVIAKSFARIFFRNAINIGLPIVELKEADEFEEGDIAEVDLENGVVRNLTKGKEYRIRPYPEFLMKIMEAGGWLEYCLKEVGE</sequence>
<dbReference type="EC" id="4.2.1.33"/>
<dbReference type="EMBL" id="AE000512">
    <property type="protein sequence ID" value="AAD35640.1"/>
    <property type="molecule type" value="Genomic_DNA"/>
</dbReference>
<dbReference type="PIR" id="A72363">
    <property type="entry name" value="A72363"/>
</dbReference>
<dbReference type="RefSeq" id="NP_228365.1">
    <property type="nucleotide sequence ID" value="NC_000853.1"/>
</dbReference>
<dbReference type="RefSeq" id="WP_010865146.1">
    <property type="nucleotide sequence ID" value="NC_000853.1"/>
</dbReference>
<dbReference type="SMR" id="Q9WZ25"/>
<dbReference type="FunCoup" id="Q9WZ25">
    <property type="interactions" value="338"/>
</dbReference>
<dbReference type="STRING" id="243274.TM_0555"/>
<dbReference type="PaxDb" id="243274-THEMA_01900"/>
<dbReference type="EnsemblBacteria" id="AAD35640">
    <property type="protein sequence ID" value="AAD35640"/>
    <property type="gene ID" value="TM_0555"/>
</dbReference>
<dbReference type="KEGG" id="tma:TM0555"/>
<dbReference type="KEGG" id="tmi:THEMA_01900"/>
<dbReference type="KEGG" id="tmw:THMA_0568"/>
<dbReference type="PATRIC" id="fig|243274.18.peg.374"/>
<dbReference type="eggNOG" id="COG0066">
    <property type="taxonomic scope" value="Bacteria"/>
</dbReference>
<dbReference type="InParanoid" id="Q9WZ25"/>
<dbReference type="OrthoDB" id="9777465at2"/>
<dbReference type="UniPathway" id="UPA00048">
    <property type="reaction ID" value="UER00071"/>
</dbReference>
<dbReference type="Proteomes" id="UP000008183">
    <property type="component" value="Chromosome"/>
</dbReference>
<dbReference type="GO" id="GO:0003861">
    <property type="term" value="F:3-isopropylmalate dehydratase activity"/>
    <property type="evidence" value="ECO:0007669"/>
    <property type="project" value="UniProtKB-UniRule"/>
</dbReference>
<dbReference type="GO" id="GO:0009098">
    <property type="term" value="P:L-leucine biosynthetic process"/>
    <property type="evidence" value="ECO:0007669"/>
    <property type="project" value="UniProtKB-UniRule"/>
</dbReference>
<dbReference type="CDD" id="cd01577">
    <property type="entry name" value="IPMI_Swivel"/>
    <property type="match status" value="1"/>
</dbReference>
<dbReference type="FunFam" id="3.20.19.10:FF:000007">
    <property type="entry name" value="Isopropylmalate/citramalate isomerase small subunit"/>
    <property type="match status" value="1"/>
</dbReference>
<dbReference type="Gene3D" id="3.20.19.10">
    <property type="entry name" value="Aconitase, domain 4"/>
    <property type="match status" value="1"/>
</dbReference>
<dbReference type="HAMAP" id="MF_01032">
    <property type="entry name" value="LeuD_type2"/>
    <property type="match status" value="1"/>
</dbReference>
<dbReference type="InterPro" id="IPR015928">
    <property type="entry name" value="Aconitase/3IPM_dehydase_swvl"/>
</dbReference>
<dbReference type="InterPro" id="IPR000573">
    <property type="entry name" value="AconitaseA/IPMdHydase_ssu_swvl"/>
</dbReference>
<dbReference type="InterPro" id="IPR033940">
    <property type="entry name" value="IPMI_Swivel"/>
</dbReference>
<dbReference type="InterPro" id="IPR050075">
    <property type="entry name" value="LeuD"/>
</dbReference>
<dbReference type="InterPro" id="IPR011824">
    <property type="entry name" value="LeuD/DmdB_bac"/>
</dbReference>
<dbReference type="InterPro" id="IPR011827">
    <property type="entry name" value="LeuD_type2/HacB/DmdB"/>
</dbReference>
<dbReference type="NCBIfam" id="TIGR02084">
    <property type="entry name" value="leud"/>
    <property type="match status" value="1"/>
</dbReference>
<dbReference type="NCBIfam" id="TIGR02087">
    <property type="entry name" value="LEUD_arch"/>
    <property type="match status" value="1"/>
</dbReference>
<dbReference type="PANTHER" id="PTHR43345:SF2">
    <property type="entry name" value="3-ISOPROPYLMALATE DEHYDRATASE SMALL SUBUNIT 1"/>
    <property type="match status" value="1"/>
</dbReference>
<dbReference type="PANTHER" id="PTHR43345">
    <property type="entry name" value="3-ISOPROPYLMALATE DEHYDRATASE SMALL SUBUNIT 2-RELATED-RELATED"/>
    <property type="match status" value="1"/>
</dbReference>
<dbReference type="Pfam" id="PF00694">
    <property type="entry name" value="Aconitase_C"/>
    <property type="match status" value="1"/>
</dbReference>
<dbReference type="SUPFAM" id="SSF52016">
    <property type="entry name" value="LeuD/IlvD-like"/>
    <property type="match status" value="1"/>
</dbReference>
<reference key="1">
    <citation type="journal article" date="1999" name="Nature">
        <title>Evidence for lateral gene transfer between Archaea and Bacteria from genome sequence of Thermotoga maritima.</title>
        <authorList>
            <person name="Nelson K.E."/>
            <person name="Clayton R.A."/>
            <person name="Gill S.R."/>
            <person name="Gwinn M.L."/>
            <person name="Dodson R.J."/>
            <person name="Haft D.H."/>
            <person name="Hickey E.K."/>
            <person name="Peterson J.D."/>
            <person name="Nelson W.C."/>
            <person name="Ketchum K.A."/>
            <person name="McDonald L.A."/>
            <person name="Utterback T.R."/>
            <person name="Malek J.A."/>
            <person name="Linher K.D."/>
            <person name="Garrett M.M."/>
            <person name="Stewart A.M."/>
            <person name="Cotton M.D."/>
            <person name="Pratt M.S."/>
            <person name="Phillips C.A."/>
            <person name="Richardson D.L."/>
            <person name="Heidelberg J.F."/>
            <person name="Sutton G.G."/>
            <person name="Fleischmann R.D."/>
            <person name="Eisen J.A."/>
            <person name="White O."/>
            <person name="Salzberg S.L."/>
            <person name="Smith H.O."/>
            <person name="Venter J.C."/>
            <person name="Fraser C.M."/>
        </authorList>
    </citation>
    <scope>NUCLEOTIDE SEQUENCE [LARGE SCALE GENOMIC DNA]</scope>
    <source>
        <strain>ATCC 43589 / DSM 3109 / JCM 10099 / NBRC 100826 / MSB8</strain>
    </source>
</reference>
<evidence type="ECO:0000250" key="1"/>
<evidence type="ECO:0000305" key="2"/>